<comment type="function">
    <text evidence="1">Metalloprotease.</text>
</comment>
<comment type="catalytic activity">
    <reaction evidence="1">
        <text>Hydrolysis of peptide bonds in substrates containing five or more amino acids, preferentially with Ala in P1', and Pro in P2'.</text>
        <dbReference type="EC" id="3.4.24.21"/>
    </reaction>
</comment>
<comment type="cofactor">
    <cofactor evidence="5">
        <name>Zn(2+)</name>
        <dbReference type="ChEBI" id="CHEBI:29105"/>
    </cofactor>
    <text evidence="5">Binds 1 zinc ion per subunit.</text>
</comment>
<comment type="subcellular location">
    <subcellularLocation>
        <location evidence="6">Secreted</location>
    </subcellularLocation>
</comment>
<evidence type="ECO:0000250" key="1">
    <source>
        <dbReference type="UniProtKB" id="P07584"/>
    </source>
</evidence>
<evidence type="ECO:0000250" key="2">
    <source>
        <dbReference type="UniProtKB" id="P13497"/>
    </source>
</evidence>
<evidence type="ECO:0000255" key="3"/>
<evidence type="ECO:0000255" key="4">
    <source>
        <dbReference type="PROSITE-ProRule" id="PRU01005"/>
    </source>
</evidence>
<evidence type="ECO:0000255" key="5">
    <source>
        <dbReference type="PROSITE-ProRule" id="PRU01211"/>
    </source>
</evidence>
<evidence type="ECO:0000305" key="6"/>
<name>NAS8_CAEEL</name>
<feature type="signal peptide" evidence="3">
    <location>
        <begin position="1"/>
        <end position="29"/>
    </location>
</feature>
<feature type="propeptide" id="PRO_0000442265" evidence="2">
    <location>
        <begin position="30"/>
        <end position="111"/>
    </location>
</feature>
<feature type="chain" id="PRO_0000028913" description="Zinc metalloproteinase nas-8">
    <location>
        <begin position="112"/>
        <end position="403"/>
    </location>
</feature>
<feature type="domain" description="Peptidase M12A" evidence="5">
    <location>
        <begin position="112"/>
        <end position="307"/>
    </location>
</feature>
<feature type="domain" description="ShKT" evidence="4">
    <location>
        <begin position="338"/>
        <end position="372"/>
    </location>
</feature>
<feature type="active site" evidence="5">
    <location>
        <position position="204"/>
    </location>
</feature>
<feature type="binding site" evidence="5">
    <location>
        <position position="203"/>
    </location>
    <ligand>
        <name>Zn(2+)</name>
        <dbReference type="ChEBI" id="CHEBI:29105"/>
        <note>catalytic</note>
    </ligand>
</feature>
<feature type="binding site" evidence="5">
    <location>
        <position position="207"/>
    </location>
    <ligand>
        <name>Zn(2+)</name>
        <dbReference type="ChEBI" id="CHEBI:29105"/>
        <note>catalytic</note>
    </ligand>
</feature>
<feature type="binding site" evidence="5">
    <location>
        <position position="213"/>
    </location>
    <ligand>
        <name>Zn(2+)</name>
        <dbReference type="ChEBI" id="CHEBI:29105"/>
        <note>catalytic</note>
    </ligand>
</feature>
<feature type="glycosylation site" description="N-linked (GlcNAc...) asparagine" evidence="3">
    <location>
        <position position="386"/>
    </location>
</feature>
<feature type="disulfide bond" evidence="5">
    <location>
        <begin position="154"/>
        <end position="306"/>
    </location>
</feature>
<feature type="disulfide bond" evidence="5">
    <location>
        <begin position="176"/>
        <end position="195"/>
    </location>
</feature>
<feature type="disulfide bond" evidence="4">
    <location>
        <begin position="338"/>
        <end position="372"/>
    </location>
</feature>
<feature type="disulfide bond" evidence="4">
    <location>
        <begin position="345"/>
        <end position="365"/>
    </location>
</feature>
<feature type="disulfide bond" evidence="4">
    <location>
        <begin position="352"/>
        <end position="369"/>
    </location>
</feature>
<dbReference type="EC" id="3.4.24.21" evidence="1"/>
<dbReference type="EMBL" id="FO080770">
    <property type="protein sequence ID" value="CCD66603.1"/>
    <property type="molecule type" value="Genomic_DNA"/>
</dbReference>
<dbReference type="EMBL" id="AJ561204">
    <property type="protein sequence ID" value="CAD99207.1"/>
    <property type="molecule type" value="mRNA"/>
</dbReference>
<dbReference type="PIR" id="T29277">
    <property type="entry name" value="T29277"/>
</dbReference>
<dbReference type="RefSeq" id="NP_501114.2">
    <property type="nucleotide sequence ID" value="NM_068713.6"/>
</dbReference>
<dbReference type="SMR" id="Q18439"/>
<dbReference type="FunCoup" id="Q18439">
    <property type="interactions" value="2"/>
</dbReference>
<dbReference type="STRING" id="6239.C34D4.9.1"/>
<dbReference type="MEROPS" id="M12.A21"/>
<dbReference type="GlyCosmos" id="Q18439">
    <property type="glycosylation" value="1 site, No reported glycans"/>
</dbReference>
<dbReference type="PaxDb" id="6239-C34D4.9"/>
<dbReference type="EnsemblMetazoa" id="C34D4.9.1">
    <property type="protein sequence ID" value="C34D4.9.1"/>
    <property type="gene ID" value="WBGene00003527"/>
</dbReference>
<dbReference type="EnsemblMetazoa" id="C34D4.9.2">
    <property type="protein sequence ID" value="C34D4.9.2"/>
    <property type="gene ID" value="WBGene00003527"/>
</dbReference>
<dbReference type="GeneID" id="183207"/>
<dbReference type="KEGG" id="cel:CELE_C34D4.9"/>
<dbReference type="UCSC" id="C34D4.9">
    <property type="organism name" value="c. elegans"/>
</dbReference>
<dbReference type="AGR" id="WB:WBGene00003527"/>
<dbReference type="CTD" id="183207"/>
<dbReference type="WormBase" id="C34D4.9">
    <property type="protein sequence ID" value="CE31327"/>
    <property type="gene ID" value="WBGene00003527"/>
    <property type="gene designation" value="nas-8"/>
</dbReference>
<dbReference type="eggNOG" id="KOG3714">
    <property type="taxonomic scope" value="Eukaryota"/>
</dbReference>
<dbReference type="GeneTree" id="ENSGT00970000196428"/>
<dbReference type="HOGENOM" id="CLU_017286_0_0_1"/>
<dbReference type="InParanoid" id="Q18439"/>
<dbReference type="OMA" id="NHITILW"/>
<dbReference type="OrthoDB" id="6665824at2759"/>
<dbReference type="PhylomeDB" id="Q18439"/>
<dbReference type="PRO" id="PR:Q18439"/>
<dbReference type="Proteomes" id="UP000001940">
    <property type="component" value="Chromosome IV"/>
</dbReference>
<dbReference type="Bgee" id="WBGene00003527">
    <property type="expression patterns" value="Expressed in larva and 2 other cell types or tissues"/>
</dbReference>
<dbReference type="GO" id="GO:0005576">
    <property type="term" value="C:extracellular region"/>
    <property type="evidence" value="ECO:0007669"/>
    <property type="project" value="UniProtKB-SubCell"/>
</dbReference>
<dbReference type="GO" id="GO:0004222">
    <property type="term" value="F:metalloendopeptidase activity"/>
    <property type="evidence" value="ECO:0000318"/>
    <property type="project" value="GO_Central"/>
</dbReference>
<dbReference type="GO" id="GO:0008270">
    <property type="term" value="F:zinc ion binding"/>
    <property type="evidence" value="ECO:0007669"/>
    <property type="project" value="InterPro"/>
</dbReference>
<dbReference type="GO" id="GO:0006508">
    <property type="term" value="P:proteolysis"/>
    <property type="evidence" value="ECO:0007669"/>
    <property type="project" value="UniProtKB-KW"/>
</dbReference>
<dbReference type="CDD" id="cd04280">
    <property type="entry name" value="ZnMc_astacin_like"/>
    <property type="match status" value="1"/>
</dbReference>
<dbReference type="FunFam" id="3.40.390.10:FF:000045">
    <property type="entry name" value="Metalloendopeptidase"/>
    <property type="match status" value="1"/>
</dbReference>
<dbReference type="Gene3D" id="3.40.390.10">
    <property type="entry name" value="Collagenase (Catalytic Domain)"/>
    <property type="match status" value="1"/>
</dbReference>
<dbReference type="InterPro" id="IPR034035">
    <property type="entry name" value="Astacin-like_dom"/>
</dbReference>
<dbReference type="InterPro" id="IPR017367">
    <property type="entry name" value="Caenorhab_nas-7/8"/>
</dbReference>
<dbReference type="InterPro" id="IPR024079">
    <property type="entry name" value="MetalloPept_cat_dom_sf"/>
</dbReference>
<dbReference type="InterPro" id="IPR001506">
    <property type="entry name" value="Peptidase_M12A"/>
</dbReference>
<dbReference type="InterPro" id="IPR006026">
    <property type="entry name" value="Peptidase_Metallo"/>
</dbReference>
<dbReference type="InterPro" id="IPR003582">
    <property type="entry name" value="ShKT_dom"/>
</dbReference>
<dbReference type="PANTHER" id="PTHR10127">
    <property type="entry name" value="DISCOIDIN, CUB, EGF, LAMININ , AND ZINC METALLOPROTEASE DOMAIN CONTAINING"/>
    <property type="match status" value="1"/>
</dbReference>
<dbReference type="PANTHER" id="PTHR10127:SF883">
    <property type="entry name" value="ZINC METALLOPROTEINASE NAS-8"/>
    <property type="match status" value="1"/>
</dbReference>
<dbReference type="Pfam" id="PF01400">
    <property type="entry name" value="Astacin"/>
    <property type="match status" value="1"/>
</dbReference>
<dbReference type="Pfam" id="PF01549">
    <property type="entry name" value="ShK"/>
    <property type="match status" value="1"/>
</dbReference>
<dbReference type="PIRSF" id="PIRSF038054">
    <property type="entry name" value="Nas7/Nas8_prd"/>
    <property type="match status" value="1"/>
</dbReference>
<dbReference type="PRINTS" id="PR00480">
    <property type="entry name" value="ASTACIN"/>
</dbReference>
<dbReference type="SMART" id="SM00254">
    <property type="entry name" value="ShKT"/>
    <property type="match status" value="1"/>
</dbReference>
<dbReference type="SMART" id="SM00235">
    <property type="entry name" value="ZnMc"/>
    <property type="match status" value="1"/>
</dbReference>
<dbReference type="SUPFAM" id="SSF55486">
    <property type="entry name" value="Metalloproteases ('zincins'), catalytic domain"/>
    <property type="match status" value="1"/>
</dbReference>
<dbReference type="PROSITE" id="PS51864">
    <property type="entry name" value="ASTACIN"/>
    <property type="match status" value="1"/>
</dbReference>
<dbReference type="PROSITE" id="PS51670">
    <property type="entry name" value="SHKT"/>
    <property type="match status" value="1"/>
</dbReference>
<dbReference type="PROSITE" id="PS00142">
    <property type="entry name" value="ZINC_PROTEASE"/>
    <property type="match status" value="1"/>
</dbReference>
<organism>
    <name type="scientific">Caenorhabditis elegans</name>
    <dbReference type="NCBI Taxonomy" id="6239"/>
    <lineage>
        <taxon>Eukaryota</taxon>
        <taxon>Metazoa</taxon>
        <taxon>Ecdysozoa</taxon>
        <taxon>Nematoda</taxon>
        <taxon>Chromadorea</taxon>
        <taxon>Rhabditida</taxon>
        <taxon>Rhabditina</taxon>
        <taxon>Rhabditomorpha</taxon>
        <taxon>Rhabditoidea</taxon>
        <taxon>Rhabditidae</taxon>
        <taxon>Peloderinae</taxon>
        <taxon>Caenorhabditis</taxon>
    </lineage>
</organism>
<reference key="1">
    <citation type="journal article" date="1998" name="Science">
        <title>Genome sequence of the nematode C. elegans: a platform for investigating biology.</title>
        <authorList>
            <consortium name="The C. elegans sequencing consortium"/>
        </authorList>
    </citation>
    <scope>NUCLEOTIDE SEQUENCE [LARGE SCALE GENOMIC DNA]</scope>
    <source>
        <strain>Bristol N2</strain>
    </source>
</reference>
<reference key="2">
    <citation type="journal article" date="2003" name="Eur. J. Biochem.">
        <title>The astacin protein family in Caenorhabditis elegans.</title>
        <authorList>
            <person name="Moehrlen F."/>
            <person name="Hutter H."/>
            <person name="Zwilling R."/>
        </authorList>
    </citation>
    <scope>NUCLEOTIDE SEQUENCE [MRNA] OF 159-195</scope>
    <scope>NOMENCLATURE</scope>
    <source>
        <strain>Bristol N2</strain>
    </source>
</reference>
<sequence>MRRNDLLNNKITIFLSSLSLFVIIIPIYAAEKDLLPPSTSSETFLTDEDFLRPLNDDETFLTEKDFKNGEKLGEDHVPAGSILWKQVYKKGDIRGKAAWKLDPKNSESLRRNGVITGTRKWPNGRIPYVISNQYNDRERAVLARSFQAYHDKTCVRFVPRTAVDNDYLYIGKIDGCYSDVGRAGGRQELSLDNGCLQYDTAIHELMHSVGFYHEHERWDRDEHITILWHNIDREAYDQFGKVDLAESSYYGQLYDYYSIMHYDSLAFSKNGFETMVAKQSEMTAVIGAAIDFSPIDILKMNLMYQCSDVKLPPTVVGTTDKTIVPVPAPSVTVVEDDCRDRTNLCWRWIDRCKSFFFEQIMKEFCSLSCGYCTPKALQTAKASPPNYSNTLLTKSSTSYLQHG</sequence>
<accession>Q18439</accession>
<accession>Q7Z0N4</accession>
<proteinExistence type="evidence at transcript level"/>
<protein>
    <recommendedName>
        <fullName>Zinc metalloproteinase nas-8</fullName>
        <ecNumber evidence="1">3.4.24.21</ecNumber>
    </recommendedName>
    <alternativeName>
        <fullName>Nematode astacin 8</fullName>
    </alternativeName>
</protein>
<gene>
    <name type="primary">nas-8</name>
    <name type="ORF">C34D4.9</name>
</gene>
<keyword id="KW-0165">Cleavage on pair of basic residues</keyword>
<keyword id="KW-1015">Disulfide bond</keyword>
<keyword id="KW-0325">Glycoprotein</keyword>
<keyword id="KW-0378">Hydrolase</keyword>
<keyword id="KW-0479">Metal-binding</keyword>
<keyword id="KW-0482">Metalloprotease</keyword>
<keyword id="KW-0645">Protease</keyword>
<keyword id="KW-1185">Reference proteome</keyword>
<keyword id="KW-0964">Secreted</keyword>
<keyword id="KW-0732">Signal</keyword>
<keyword id="KW-0862">Zinc</keyword>
<keyword id="KW-0865">Zymogen</keyword>